<sequence length="230" mass="26051">MAHPSQLGFQDAASPVMEELLHFHDHALMIVFLISTLVLYIIAATASTKLTDKYILDSQEIEVIWTIMPAVILILIALPSLRILYLMDEINDPHLTVKTMGHQWYWSYEYTDYDDLSFDSYMIPTQDLTPGQFRLLETDHRMVIPVDSPIRVLVSAEDVLHSWAVPSLGIKMDAVPGRLNQTAFIVSRPGVFYGQCSEICGANHSFMPIVVEAVPLEHFENWSSLMLEDA</sequence>
<reference key="1">
    <citation type="journal article" date="2006" name="DNA Seq.">
        <title>The complete nucleotide sequence of the mitochondrial genome of Tetraodon nigroviridis.</title>
        <authorList>
            <person name="Yue G.H."/>
            <person name="Lo L.C."/>
            <person name="Zhu Z.Y."/>
            <person name="Lin G."/>
            <person name="Feng F."/>
        </authorList>
    </citation>
    <scope>NUCLEOTIDE SEQUENCE [LARGE SCALE GENOMIC DNA]</scope>
</reference>
<gene>
    <name type="primary">mt-co2</name>
    <name type="synonym">coii</name>
    <name type="synonym">coxii</name>
    <name type="synonym">mtco2</name>
</gene>
<feature type="chain" id="PRO_0000183702" description="Cytochrome c oxidase subunit 2">
    <location>
        <begin position="1"/>
        <end position="230"/>
    </location>
</feature>
<feature type="topological domain" description="Mitochondrial intermembrane" evidence="3">
    <location>
        <begin position="1"/>
        <end position="14"/>
    </location>
</feature>
<feature type="transmembrane region" description="Helical; Name=I" evidence="3">
    <location>
        <begin position="15"/>
        <end position="45"/>
    </location>
</feature>
<feature type="topological domain" description="Mitochondrial matrix" evidence="3">
    <location>
        <begin position="46"/>
        <end position="59"/>
    </location>
</feature>
<feature type="transmembrane region" description="Helical; Name=II" evidence="3">
    <location>
        <begin position="60"/>
        <end position="87"/>
    </location>
</feature>
<feature type="topological domain" description="Mitochondrial intermembrane" evidence="3">
    <location>
        <begin position="88"/>
        <end position="230"/>
    </location>
</feature>
<feature type="binding site" evidence="3">
    <location>
        <position position="161"/>
    </location>
    <ligand>
        <name>Cu cation</name>
        <dbReference type="ChEBI" id="CHEBI:23378"/>
        <label>A1</label>
    </ligand>
</feature>
<feature type="binding site" evidence="3">
    <location>
        <position position="196"/>
    </location>
    <ligand>
        <name>Cu cation</name>
        <dbReference type="ChEBI" id="CHEBI:23378"/>
        <label>A1</label>
    </ligand>
</feature>
<feature type="binding site" evidence="3">
    <location>
        <position position="196"/>
    </location>
    <ligand>
        <name>Cu cation</name>
        <dbReference type="ChEBI" id="CHEBI:23378"/>
        <label>A2</label>
    </ligand>
</feature>
<feature type="binding site" evidence="3">
    <location>
        <position position="198"/>
    </location>
    <ligand>
        <name>Cu cation</name>
        <dbReference type="ChEBI" id="CHEBI:23378"/>
        <label>A2</label>
    </ligand>
</feature>
<feature type="binding site" evidence="3">
    <location>
        <position position="198"/>
    </location>
    <ligand>
        <name>Mg(2+)</name>
        <dbReference type="ChEBI" id="CHEBI:18420"/>
        <note>ligand shared with MT-CO1</note>
    </ligand>
</feature>
<feature type="binding site" evidence="3">
    <location>
        <position position="200"/>
    </location>
    <ligand>
        <name>Cu cation</name>
        <dbReference type="ChEBI" id="CHEBI:23378"/>
        <label>A1</label>
    </ligand>
</feature>
<feature type="binding site" evidence="3">
    <location>
        <position position="200"/>
    </location>
    <ligand>
        <name>Cu cation</name>
        <dbReference type="ChEBI" id="CHEBI:23378"/>
        <label>A2</label>
    </ligand>
</feature>
<feature type="binding site" evidence="3">
    <location>
        <position position="204"/>
    </location>
    <ligand>
        <name>Cu cation</name>
        <dbReference type="ChEBI" id="CHEBI:23378"/>
        <label>A2</label>
    </ligand>
</feature>
<feature type="binding site" evidence="3">
    <location>
        <position position="207"/>
    </location>
    <ligand>
        <name>Cu cation</name>
        <dbReference type="ChEBI" id="CHEBI:23378"/>
        <label>A1</label>
    </ligand>
</feature>
<comment type="function">
    <text evidence="2">Component of the cytochrome c oxidase, the last enzyme in the mitochondrial electron transport chain which drives oxidative phosphorylation. The respiratory chain contains 3 multisubunit complexes succinate dehydrogenase (complex II, CII), ubiquinol-cytochrome c oxidoreductase (cytochrome b-c1 complex, complex III, CIII) and cytochrome c oxidase (complex IV, CIV), that cooperate to transfer electrons derived from NADH and succinate to molecular oxygen, creating an electrochemical gradient over the inner membrane that drives transmembrane transport and the ATP synthase. Cytochrome c oxidase is the component of the respiratory chain that catalyzes the reduction of oxygen to water. Electrons originating from reduced cytochrome c in the intermembrane space (IMS) are transferred via the dinuclear copper A center (CU(A)) of subunit 2 and heme A of subunit 1 to the active site in subunit 1, a binuclear center (BNC) formed by heme A3 and copper B (CU(B)). The BNC reduces molecular oxygen to 2 water molecules using 4 electrons from cytochrome c in the IMS and 4 protons from the mitochondrial matrix.</text>
</comment>
<comment type="catalytic activity">
    <reaction evidence="2">
        <text>4 Fe(II)-[cytochrome c] + O2 + 8 H(+)(in) = 4 Fe(III)-[cytochrome c] + 2 H2O + 4 H(+)(out)</text>
        <dbReference type="Rhea" id="RHEA:11436"/>
        <dbReference type="Rhea" id="RHEA-COMP:10350"/>
        <dbReference type="Rhea" id="RHEA-COMP:14399"/>
        <dbReference type="ChEBI" id="CHEBI:15377"/>
        <dbReference type="ChEBI" id="CHEBI:15378"/>
        <dbReference type="ChEBI" id="CHEBI:15379"/>
        <dbReference type="ChEBI" id="CHEBI:29033"/>
        <dbReference type="ChEBI" id="CHEBI:29034"/>
        <dbReference type="EC" id="7.1.1.9"/>
    </reaction>
    <physiologicalReaction direction="left-to-right" evidence="2">
        <dbReference type="Rhea" id="RHEA:11437"/>
    </physiologicalReaction>
</comment>
<comment type="cofactor">
    <cofactor evidence="3">
        <name>Cu cation</name>
        <dbReference type="ChEBI" id="CHEBI:23378"/>
    </cofactor>
    <text evidence="3">Binds a dinuclear copper A center per subunit.</text>
</comment>
<comment type="subunit">
    <text evidence="1 3">Component of the cytochrome c oxidase (complex IV, CIV), a multisubunit enzyme composed of 14 subunits. The complex is composed of a catalytic core of 3 subunits MT-CO1, MT-CO2 and MT-CO3, encoded in the mitochondrial DNA, and 11 supernumerary subunits COX4I, COX5A, COX5B, COX6A, COX6B, COX6C, COX7A, COX7B, COX7C, COX8 and NDUFA4, which are encoded in the nuclear genome. The complex exists as a monomer or a dimer and forms supercomplexes (SCs) in the inner mitochondrial membrane with NADH-ubiquinone oxidoreductase (complex I, CI) and ubiquinol-cytochrome c oxidoreductase (cytochrome b-c1 complex, complex III, CIII), resulting in different assemblies (supercomplex SCI(1)III(2)IV(1) and megacomplex MCI(2)III(2)IV(2)) (By similarity). Found in a complex with TMEM177, COA6, COX18, COX20, SCO1 and SCO2. Interacts with TMEM177 in a COX20-dependent manner. Interacts with COX20. Interacts with COX16 (By similarity).</text>
</comment>
<comment type="subcellular location">
    <subcellularLocation>
        <location evidence="3">Mitochondrion inner membrane</location>
        <topology evidence="3">Multi-pass membrane protein</topology>
    </subcellularLocation>
</comment>
<comment type="similarity">
    <text evidence="4">Belongs to the cytochrome c oxidase subunit 2 family.</text>
</comment>
<accession>Q4JQI4</accession>
<keyword id="KW-0186">Copper</keyword>
<keyword id="KW-0249">Electron transport</keyword>
<keyword id="KW-0460">Magnesium</keyword>
<keyword id="KW-0472">Membrane</keyword>
<keyword id="KW-0479">Metal-binding</keyword>
<keyword id="KW-0496">Mitochondrion</keyword>
<keyword id="KW-0999">Mitochondrion inner membrane</keyword>
<keyword id="KW-1185">Reference proteome</keyword>
<keyword id="KW-0679">Respiratory chain</keyword>
<keyword id="KW-1278">Translocase</keyword>
<keyword id="KW-0812">Transmembrane</keyword>
<keyword id="KW-1133">Transmembrane helix</keyword>
<keyword id="KW-0813">Transport</keyword>
<organism>
    <name type="scientific">Tetraodon nigroviridis</name>
    <name type="common">Spotted green pufferfish</name>
    <name type="synonym">Chelonodon nigroviridis</name>
    <dbReference type="NCBI Taxonomy" id="99883"/>
    <lineage>
        <taxon>Eukaryota</taxon>
        <taxon>Metazoa</taxon>
        <taxon>Chordata</taxon>
        <taxon>Craniata</taxon>
        <taxon>Vertebrata</taxon>
        <taxon>Euteleostomi</taxon>
        <taxon>Actinopterygii</taxon>
        <taxon>Neopterygii</taxon>
        <taxon>Teleostei</taxon>
        <taxon>Neoteleostei</taxon>
        <taxon>Acanthomorphata</taxon>
        <taxon>Eupercaria</taxon>
        <taxon>Tetraodontiformes</taxon>
        <taxon>Tetradontoidea</taxon>
        <taxon>Tetraodontidae</taxon>
        <taxon>Tetraodon</taxon>
    </lineage>
</organism>
<name>COX2_TETNG</name>
<proteinExistence type="inferred from homology"/>
<geneLocation type="mitochondrion"/>
<protein>
    <recommendedName>
        <fullName>Cytochrome c oxidase subunit 2</fullName>
        <ecNumber>7.1.1.9</ecNumber>
    </recommendedName>
    <alternativeName>
        <fullName>Cytochrome c oxidase polypeptide II</fullName>
    </alternativeName>
</protein>
<dbReference type="EC" id="7.1.1.9"/>
<dbReference type="EMBL" id="DQ019313">
    <property type="protein sequence ID" value="AAY26161.1"/>
    <property type="molecule type" value="Genomic_DNA"/>
</dbReference>
<dbReference type="SMR" id="Q4JQI4"/>
<dbReference type="FunCoup" id="Q4JQI4">
    <property type="interactions" value="11"/>
</dbReference>
<dbReference type="STRING" id="99883.ENSTNIP00000002153"/>
<dbReference type="Ensembl" id="ENSTNIT00000004109.1">
    <property type="protein sequence ID" value="ENSTNIP00000002153.1"/>
    <property type="gene ID" value="ENSTNIG00000000112.1"/>
</dbReference>
<dbReference type="GeneTree" id="ENSGT00390000017410"/>
<dbReference type="HOGENOM" id="CLU_036876_2_3_1"/>
<dbReference type="InParanoid" id="Q4JQI4"/>
<dbReference type="OMA" id="WSYEYTD"/>
<dbReference type="TreeFam" id="TF344269"/>
<dbReference type="Proteomes" id="UP000007303">
    <property type="component" value="Mitochondrion"/>
</dbReference>
<dbReference type="GO" id="GO:0005743">
    <property type="term" value="C:mitochondrial inner membrane"/>
    <property type="evidence" value="ECO:0007669"/>
    <property type="project" value="UniProtKB-SubCell"/>
</dbReference>
<dbReference type="GO" id="GO:0045277">
    <property type="term" value="C:respiratory chain complex IV"/>
    <property type="evidence" value="ECO:0000250"/>
    <property type="project" value="UniProtKB"/>
</dbReference>
<dbReference type="GO" id="GO:0005507">
    <property type="term" value="F:copper ion binding"/>
    <property type="evidence" value="ECO:0007669"/>
    <property type="project" value="InterPro"/>
</dbReference>
<dbReference type="GO" id="GO:0004129">
    <property type="term" value="F:cytochrome-c oxidase activity"/>
    <property type="evidence" value="ECO:0007669"/>
    <property type="project" value="UniProtKB-EC"/>
</dbReference>
<dbReference type="GO" id="GO:0042773">
    <property type="term" value="P:ATP synthesis coupled electron transport"/>
    <property type="evidence" value="ECO:0007669"/>
    <property type="project" value="TreeGrafter"/>
</dbReference>
<dbReference type="CDD" id="cd13912">
    <property type="entry name" value="CcO_II_C"/>
    <property type="match status" value="1"/>
</dbReference>
<dbReference type="FunFam" id="1.10.287.90:FF:000001">
    <property type="entry name" value="Cytochrome c oxidase subunit 2"/>
    <property type="match status" value="1"/>
</dbReference>
<dbReference type="FunFam" id="2.60.40.420:FF:000001">
    <property type="entry name" value="Cytochrome c oxidase subunit 2"/>
    <property type="match status" value="1"/>
</dbReference>
<dbReference type="Gene3D" id="1.10.287.90">
    <property type="match status" value="1"/>
</dbReference>
<dbReference type="Gene3D" id="2.60.40.420">
    <property type="entry name" value="Cupredoxins - blue copper proteins"/>
    <property type="match status" value="1"/>
</dbReference>
<dbReference type="InterPro" id="IPR045187">
    <property type="entry name" value="CcO_II"/>
</dbReference>
<dbReference type="InterPro" id="IPR002429">
    <property type="entry name" value="CcO_II-like_C"/>
</dbReference>
<dbReference type="InterPro" id="IPR034210">
    <property type="entry name" value="CcO_II_C"/>
</dbReference>
<dbReference type="InterPro" id="IPR001505">
    <property type="entry name" value="Copper_CuA"/>
</dbReference>
<dbReference type="InterPro" id="IPR008972">
    <property type="entry name" value="Cupredoxin"/>
</dbReference>
<dbReference type="InterPro" id="IPR014222">
    <property type="entry name" value="Cyt_c_oxidase_su2"/>
</dbReference>
<dbReference type="InterPro" id="IPR011759">
    <property type="entry name" value="Cyt_c_oxidase_su2_TM_dom"/>
</dbReference>
<dbReference type="InterPro" id="IPR036257">
    <property type="entry name" value="Cyt_c_oxidase_su2_TM_sf"/>
</dbReference>
<dbReference type="NCBIfam" id="TIGR02866">
    <property type="entry name" value="CoxB"/>
    <property type="match status" value="1"/>
</dbReference>
<dbReference type="PANTHER" id="PTHR22888:SF9">
    <property type="entry name" value="CYTOCHROME C OXIDASE SUBUNIT 2"/>
    <property type="match status" value="1"/>
</dbReference>
<dbReference type="PANTHER" id="PTHR22888">
    <property type="entry name" value="CYTOCHROME C OXIDASE, SUBUNIT II"/>
    <property type="match status" value="1"/>
</dbReference>
<dbReference type="Pfam" id="PF00116">
    <property type="entry name" value="COX2"/>
    <property type="match status" value="1"/>
</dbReference>
<dbReference type="Pfam" id="PF02790">
    <property type="entry name" value="COX2_TM"/>
    <property type="match status" value="1"/>
</dbReference>
<dbReference type="PRINTS" id="PR01166">
    <property type="entry name" value="CYCOXIDASEII"/>
</dbReference>
<dbReference type="SUPFAM" id="SSF49503">
    <property type="entry name" value="Cupredoxins"/>
    <property type="match status" value="1"/>
</dbReference>
<dbReference type="SUPFAM" id="SSF81464">
    <property type="entry name" value="Cytochrome c oxidase subunit II-like, transmembrane region"/>
    <property type="match status" value="1"/>
</dbReference>
<dbReference type="PROSITE" id="PS00078">
    <property type="entry name" value="COX2"/>
    <property type="match status" value="1"/>
</dbReference>
<dbReference type="PROSITE" id="PS50857">
    <property type="entry name" value="COX2_CUA"/>
    <property type="match status" value="1"/>
</dbReference>
<dbReference type="PROSITE" id="PS50999">
    <property type="entry name" value="COX2_TM"/>
    <property type="match status" value="1"/>
</dbReference>
<evidence type="ECO:0000250" key="1">
    <source>
        <dbReference type="UniProtKB" id="P00403"/>
    </source>
</evidence>
<evidence type="ECO:0000250" key="2">
    <source>
        <dbReference type="UniProtKB" id="P00410"/>
    </source>
</evidence>
<evidence type="ECO:0000250" key="3">
    <source>
        <dbReference type="UniProtKB" id="P68530"/>
    </source>
</evidence>
<evidence type="ECO:0000305" key="4"/>